<protein>
    <recommendedName>
        <fullName evidence="1">Elongation factor G</fullName>
        <shortName evidence="1">EF-G</shortName>
    </recommendedName>
</protein>
<dbReference type="EMBL" id="CP000031">
    <property type="protein sequence ID" value="AAV96724.1"/>
    <property type="molecule type" value="Genomic_DNA"/>
</dbReference>
<dbReference type="RefSeq" id="WP_011049180.1">
    <property type="nucleotide sequence ID" value="NC_003911.12"/>
</dbReference>
<dbReference type="SMR" id="Q5LMR4"/>
<dbReference type="STRING" id="246200.SPO3499"/>
<dbReference type="PaxDb" id="246200-SPO3499"/>
<dbReference type="KEGG" id="sil:SPO3499"/>
<dbReference type="eggNOG" id="COG0480">
    <property type="taxonomic scope" value="Bacteria"/>
</dbReference>
<dbReference type="HOGENOM" id="CLU_002794_4_1_5"/>
<dbReference type="OrthoDB" id="9802948at2"/>
<dbReference type="Proteomes" id="UP000001023">
    <property type="component" value="Chromosome"/>
</dbReference>
<dbReference type="GO" id="GO:0005737">
    <property type="term" value="C:cytoplasm"/>
    <property type="evidence" value="ECO:0007669"/>
    <property type="project" value="UniProtKB-SubCell"/>
</dbReference>
<dbReference type="GO" id="GO:0005525">
    <property type="term" value="F:GTP binding"/>
    <property type="evidence" value="ECO:0007669"/>
    <property type="project" value="UniProtKB-UniRule"/>
</dbReference>
<dbReference type="GO" id="GO:0003924">
    <property type="term" value="F:GTPase activity"/>
    <property type="evidence" value="ECO:0007669"/>
    <property type="project" value="InterPro"/>
</dbReference>
<dbReference type="GO" id="GO:0003746">
    <property type="term" value="F:translation elongation factor activity"/>
    <property type="evidence" value="ECO:0007669"/>
    <property type="project" value="UniProtKB-UniRule"/>
</dbReference>
<dbReference type="GO" id="GO:0032790">
    <property type="term" value="P:ribosome disassembly"/>
    <property type="evidence" value="ECO:0007669"/>
    <property type="project" value="TreeGrafter"/>
</dbReference>
<dbReference type="CDD" id="cd01886">
    <property type="entry name" value="EF-G"/>
    <property type="match status" value="1"/>
</dbReference>
<dbReference type="CDD" id="cd16262">
    <property type="entry name" value="EFG_III"/>
    <property type="match status" value="1"/>
</dbReference>
<dbReference type="CDD" id="cd01434">
    <property type="entry name" value="EFG_mtEFG1_IV"/>
    <property type="match status" value="1"/>
</dbReference>
<dbReference type="CDD" id="cd03713">
    <property type="entry name" value="EFG_mtEFG_C"/>
    <property type="match status" value="1"/>
</dbReference>
<dbReference type="CDD" id="cd04088">
    <property type="entry name" value="EFG_mtEFG_II"/>
    <property type="match status" value="1"/>
</dbReference>
<dbReference type="FunFam" id="2.40.30.10:FF:000006">
    <property type="entry name" value="Elongation factor G"/>
    <property type="match status" value="1"/>
</dbReference>
<dbReference type="FunFam" id="3.30.230.10:FF:000003">
    <property type="entry name" value="Elongation factor G"/>
    <property type="match status" value="1"/>
</dbReference>
<dbReference type="FunFam" id="3.30.70.240:FF:000001">
    <property type="entry name" value="Elongation factor G"/>
    <property type="match status" value="1"/>
</dbReference>
<dbReference type="FunFam" id="3.30.70.870:FF:000001">
    <property type="entry name" value="Elongation factor G"/>
    <property type="match status" value="1"/>
</dbReference>
<dbReference type="FunFam" id="3.40.50.300:FF:000029">
    <property type="entry name" value="Elongation factor G"/>
    <property type="match status" value="1"/>
</dbReference>
<dbReference type="Gene3D" id="3.30.230.10">
    <property type="match status" value="1"/>
</dbReference>
<dbReference type="Gene3D" id="3.30.70.240">
    <property type="match status" value="1"/>
</dbReference>
<dbReference type="Gene3D" id="3.30.70.870">
    <property type="entry name" value="Elongation Factor G (Translational Gtpase), domain 3"/>
    <property type="match status" value="1"/>
</dbReference>
<dbReference type="Gene3D" id="3.40.50.300">
    <property type="entry name" value="P-loop containing nucleotide triphosphate hydrolases"/>
    <property type="match status" value="1"/>
</dbReference>
<dbReference type="Gene3D" id="2.40.30.10">
    <property type="entry name" value="Translation factors"/>
    <property type="match status" value="1"/>
</dbReference>
<dbReference type="HAMAP" id="MF_00054_B">
    <property type="entry name" value="EF_G_EF_2_B"/>
    <property type="match status" value="1"/>
</dbReference>
<dbReference type="InterPro" id="IPR053905">
    <property type="entry name" value="EF-G-like_DII"/>
</dbReference>
<dbReference type="InterPro" id="IPR041095">
    <property type="entry name" value="EFG_II"/>
</dbReference>
<dbReference type="InterPro" id="IPR009022">
    <property type="entry name" value="EFG_III"/>
</dbReference>
<dbReference type="InterPro" id="IPR035647">
    <property type="entry name" value="EFG_III/V"/>
</dbReference>
<dbReference type="InterPro" id="IPR047872">
    <property type="entry name" value="EFG_IV"/>
</dbReference>
<dbReference type="InterPro" id="IPR035649">
    <property type="entry name" value="EFG_V"/>
</dbReference>
<dbReference type="InterPro" id="IPR000640">
    <property type="entry name" value="EFG_V-like"/>
</dbReference>
<dbReference type="InterPro" id="IPR031157">
    <property type="entry name" value="G_TR_CS"/>
</dbReference>
<dbReference type="InterPro" id="IPR027417">
    <property type="entry name" value="P-loop_NTPase"/>
</dbReference>
<dbReference type="InterPro" id="IPR020568">
    <property type="entry name" value="Ribosomal_Su5_D2-typ_SF"/>
</dbReference>
<dbReference type="InterPro" id="IPR014721">
    <property type="entry name" value="Ribsml_uS5_D2-typ_fold_subgr"/>
</dbReference>
<dbReference type="InterPro" id="IPR005225">
    <property type="entry name" value="Small_GTP-bd"/>
</dbReference>
<dbReference type="InterPro" id="IPR000795">
    <property type="entry name" value="T_Tr_GTP-bd_dom"/>
</dbReference>
<dbReference type="InterPro" id="IPR009000">
    <property type="entry name" value="Transl_B-barrel_sf"/>
</dbReference>
<dbReference type="InterPro" id="IPR004540">
    <property type="entry name" value="Transl_elong_EFG/EF2"/>
</dbReference>
<dbReference type="InterPro" id="IPR005517">
    <property type="entry name" value="Transl_elong_EFG/EF2_IV"/>
</dbReference>
<dbReference type="NCBIfam" id="TIGR00484">
    <property type="entry name" value="EF-G"/>
    <property type="match status" value="1"/>
</dbReference>
<dbReference type="NCBIfam" id="NF009381">
    <property type="entry name" value="PRK12740.1-5"/>
    <property type="match status" value="1"/>
</dbReference>
<dbReference type="NCBIfam" id="TIGR00231">
    <property type="entry name" value="small_GTP"/>
    <property type="match status" value="1"/>
</dbReference>
<dbReference type="PANTHER" id="PTHR43261:SF1">
    <property type="entry name" value="RIBOSOME-RELEASING FACTOR 2, MITOCHONDRIAL"/>
    <property type="match status" value="1"/>
</dbReference>
<dbReference type="PANTHER" id="PTHR43261">
    <property type="entry name" value="TRANSLATION ELONGATION FACTOR G-RELATED"/>
    <property type="match status" value="1"/>
</dbReference>
<dbReference type="Pfam" id="PF22042">
    <property type="entry name" value="EF-G_D2"/>
    <property type="match status" value="1"/>
</dbReference>
<dbReference type="Pfam" id="PF00679">
    <property type="entry name" value="EFG_C"/>
    <property type="match status" value="1"/>
</dbReference>
<dbReference type="Pfam" id="PF14492">
    <property type="entry name" value="EFG_III"/>
    <property type="match status" value="1"/>
</dbReference>
<dbReference type="Pfam" id="PF03764">
    <property type="entry name" value="EFG_IV"/>
    <property type="match status" value="1"/>
</dbReference>
<dbReference type="Pfam" id="PF00009">
    <property type="entry name" value="GTP_EFTU"/>
    <property type="match status" value="1"/>
</dbReference>
<dbReference type="PRINTS" id="PR00315">
    <property type="entry name" value="ELONGATNFCT"/>
</dbReference>
<dbReference type="SMART" id="SM00838">
    <property type="entry name" value="EFG_C"/>
    <property type="match status" value="1"/>
</dbReference>
<dbReference type="SMART" id="SM00889">
    <property type="entry name" value="EFG_IV"/>
    <property type="match status" value="1"/>
</dbReference>
<dbReference type="SUPFAM" id="SSF54980">
    <property type="entry name" value="EF-G C-terminal domain-like"/>
    <property type="match status" value="2"/>
</dbReference>
<dbReference type="SUPFAM" id="SSF52540">
    <property type="entry name" value="P-loop containing nucleoside triphosphate hydrolases"/>
    <property type="match status" value="1"/>
</dbReference>
<dbReference type="SUPFAM" id="SSF54211">
    <property type="entry name" value="Ribosomal protein S5 domain 2-like"/>
    <property type="match status" value="1"/>
</dbReference>
<dbReference type="SUPFAM" id="SSF50447">
    <property type="entry name" value="Translation proteins"/>
    <property type="match status" value="1"/>
</dbReference>
<dbReference type="PROSITE" id="PS00301">
    <property type="entry name" value="G_TR_1"/>
    <property type="match status" value="1"/>
</dbReference>
<dbReference type="PROSITE" id="PS51722">
    <property type="entry name" value="G_TR_2"/>
    <property type="match status" value="1"/>
</dbReference>
<proteinExistence type="inferred from homology"/>
<evidence type="ECO:0000255" key="1">
    <source>
        <dbReference type="HAMAP-Rule" id="MF_00054"/>
    </source>
</evidence>
<sequence>MAREYPLNLYRNFGIMAHIDAGKTTCSERILYYTGKSHNIGEVHDGAATMDWMEQEQERGITITSAATTTFWERTEDGATADTPKHRLNIIDTPGHVDFTIEVERSLAVLDGAVCVLDANAGVEPQTETVWRQADRYKVPRMVFVNKMDKIGADFFNCVRMIEDRTGARAVPVGIPIGAETELEGLVDLVTMEEWLWQGEDLGASWVKAPIRDSLKDMAEEWRGKMIEAAVEEDDDAMMEYLEGNEPDVPTLRKLLRKGTLALHFVPVLGGSAFKNKGVQPLLNAVIDYLPSPLDVVDYMGFKPGDEEEVRNIARRADDNMAFSGLAFKIMNDPFVGSLTFTRVYSGVLKKGDTMLNSTKGKKERVGRMMMMHSNNREEIDEAFAGDIIALAGLKDTTTGDTLCDAKDPVVLETMTFPDPVIEIAVEPKTKGDQEKMSQGLARLAAEDPSFRVETDIESGQTIMKGMGELHLDILVDRLKREFKVEANIGAPQVAYRETISKEVEHTYTHKKQSGGSGQFAEVKLVITPTEPGEGYSFESRIVGGAVPKEYIPGVEKGIKSVMDSGPLAGFPVIDFKVALIDGKFHDVDSSVLAFEIAARMGMREGMKKAGAKLLEPIMKVEVITPEEYTGGIIGDLTSRRGQVSGQESRGNAIAINAFVPLANMFGYINTLRSMSSGRAQFTMLFDHYDPVPQNISDEIQAKYA</sequence>
<accession>Q5LMR4</accession>
<keyword id="KW-0963">Cytoplasm</keyword>
<keyword id="KW-0251">Elongation factor</keyword>
<keyword id="KW-0342">GTP-binding</keyword>
<keyword id="KW-0547">Nucleotide-binding</keyword>
<keyword id="KW-0648">Protein biosynthesis</keyword>
<keyword id="KW-1185">Reference proteome</keyword>
<feature type="chain" id="PRO_0000091212" description="Elongation factor G">
    <location>
        <begin position="1"/>
        <end position="705"/>
    </location>
</feature>
<feature type="domain" description="tr-type G">
    <location>
        <begin position="8"/>
        <end position="294"/>
    </location>
</feature>
<feature type="binding site" evidence="1">
    <location>
        <begin position="17"/>
        <end position="24"/>
    </location>
    <ligand>
        <name>GTP</name>
        <dbReference type="ChEBI" id="CHEBI:37565"/>
    </ligand>
</feature>
<feature type="binding site" evidence="1">
    <location>
        <begin position="92"/>
        <end position="96"/>
    </location>
    <ligand>
        <name>GTP</name>
        <dbReference type="ChEBI" id="CHEBI:37565"/>
    </ligand>
</feature>
<feature type="binding site" evidence="1">
    <location>
        <begin position="146"/>
        <end position="149"/>
    </location>
    <ligand>
        <name>GTP</name>
        <dbReference type="ChEBI" id="CHEBI:37565"/>
    </ligand>
</feature>
<comment type="function">
    <text evidence="1">Catalyzes the GTP-dependent ribosomal translocation step during translation elongation. During this step, the ribosome changes from the pre-translocational (PRE) to the post-translocational (POST) state as the newly formed A-site-bound peptidyl-tRNA and P-site-bound deacylated tRNA move to the P and E sites, respectively. Catalyzes the coordinated movement of the two tRNA molecules, the mRNA and conformational changes in the ribosome.</text>
</comment>
<comment type="subcellular location">
    <subcellularLocation>
        <location evidence="1">Cytoplasm</location>
    </subcellularLocation>
</comment>
<comment type="similarity">
    <text evidence="1">Belongs to the TRAFAC class translation factor GTPase superfamily. Classic translation factor GTPase family. EF-G/EF-2 subfamily.</text>
</comment>
<gene>
    <name evidence="1" type="primary">fusA</name>
    <name type="ordered locus">SPO3499</name>
</gene>
<organism>
    <name type="scientific">Ruegeria pomeroyi (strain ATCC 700808 / DSM 15171 / DSS-3)</name>
    <name type="common">Silicibacter pomeroyi</name>
    <dbReference type="NCBI Taxonomy" id="246200"/>
    <lineage>
        <taxon>Bacteria</taxon>
        <taxon>Pseudomonadati</taxon>
        <taxon>Pseudomonadota</taxon>
        <taxon>Alphaproteobacteria</taxon>
        <taxon>Rhodobacterales</taxon>
        <taxon>Roseobacteraceae</taxon>
        <taxon>Ruegeria</taxon>
    </lineage>
</organism>
<reference key="1">
    <citation type="journal article" date="2004" name="Nature">
        <title>Genome sequence of Silicibacter pomeroyi reveals adaptations to the marine environment.</title>
        <authorList>
            <person name="Moran M.A."/>
            <person name="Buchan A."/>
            <person name="Gonzalez J.M."/>
            <person name="Heidelberg J.F."/>
            <person name="Whitman W.B."/>
            <person name="Kiene R.P."/>
            <person name="Henriksen J.R."/>
            <person name="King G.M."/>
            <person name="Belas R."/>
            <person name="Fuqua C."/>
            <person name="Brinkac L.M."/>
            <person name="Lewis M."/>
            <person name="Johri S."/>
            <person name="Weaver B."/>
            <person name="Pai G."/>
            <person name="Eisen J.A."/>
            <person name="Rahe E."/>
            <person name="Sheldon W.M."/>
            <person name="Ye W."/>
            <person name="Miller T.R."/>
            <person name="Carlton J."/>
            <person name="Rasko D.A."/>
            <person name="Paulsen I.T."/>
            <person name="Ren Q."/>
            <person name="Daugherty S.C."/>
            <person name="DeBoy R.T."/>
            <person name="Dodson R.J."/>
            <person name="Durkin A.S."/>
            <person name="Madupu R."/>
            <person name="Nelson W.C."/>
            <person name="Sullivan S.A."/>
            <person name="Rosovitz M.J."/>
            <person name="Haft D.H."/>
            <person name="Selengut J."/>
            <person name="Ward N."/>
        </authorList>
    </citation>
    <scope>NUCLEOTIDE SEQUENCE [LARGE SCALE GENOMIC DNA]</scope>
    <source>
        <strain>ATCC 700808 / DSM 15171 / DSS-3</strain>
    </source>
</reference>
<reference key="2">
    <citation type="journal article" date="2014" name="Stand. Genomic Sci.">
        <title>An updated genome annotation for the model marine bacterium Ruegeria pomeroyi DSS-3.</title>
        <authorList>
            <person name="Rivers A.R."/>
            <person name="Smith C.B."/>
            <person name="Moran M.A."/>
        </authorList>
    </citation>
    <scope>GENOME REANNOTATION</scope>
    <source>
        <strain>ATCC 700808 / DSM 15171 / DSS-3</strain>
    </source>
</reference>
<name>EFG_RUEPO</name>